<comment type="function">
    <text evidence="1">Catalyzes amidations at positions B, D, E, and G on adenosylcobyrinic A,C-diamide. NH(2) groups are provided by glutamine, and one molecule of ATP is hydrogenolyzed for each amidation.</text>
</comment>
<comment type="pathway">
    <text evidence="1">Cofactor biosynthesis; adenosylcobalamin biosynthesis.</text>
</comment>
<comment type="similarity">
    <text evidence="1">Belongs to the CobB/CobQ family. CobQ subfamily.</text>
</comment>
<sequence length="492" mass="52900">MSLIVLGTASHVGKSMTVAALCRALYRRGIPVAPFKSQNMSLNSYVTVDGSEIGIAQAVQAFAAGIEPEADMNPILLKPKGDSVSQVVLLGRPYKDVQIRDYYRETDTLLAEAVSAFERLRSRFGNVVVEGAGGAAEVNLYDRDIANIRLARSLRLPIVLVADIERGGVFAQVYGTLALLPEDIRPLVAGIIVNKFRGDPGLFAPGVAKLEELTGVPVLGVVPFADIPLPSEDSLSIADKRDRKTGTPVRIAVVRLPRISNFTDFELLEEHVAVDYVPPGGTLSGYDCIILPGTKNTVEDLAALNRHGVGEELRLARERGVPIIGICGGYQMLGRRIVDAGIESENPAEYAGFGLLDVVTAFTGYRKTTVQVRRRATGPGPILPAMGEVDGYEIHMGETERGDLSEAFAGEGASTPDGLVFGTYMHGLFQNPGAANALLAYLAKRRGVAFEPVTAESTALGAAASYDDLARHFEEHVDMDAIMKYFIDRRSE</sequence>
<keyword id="KW-0169">Cobalamin biosynthesis</keyword>
<keyword id="KW-0315">Glutamine amidotransferase</keyword>
<name>COBQ_METMJ</name>
<evidence type="ECO:0000255" key="1">
    <source>
        <dbReference type="HAMAP-Rule" id="MF_00028"/>
    </source>
</evidence>
<accession>A3CX25</accession>
<protein>
    <recommendedName>
        <fullName evidence="1">Probable cobyric acid synthase</fullName>
    </recommendedName>
</protein>
<proteinExistence type="inferred from homology"/>
<reference key="1">
    <citation type="journal article" date="2009" name="Stand. Genomic Sci.">
        <title>Complete genome sequence of Methanoculleus marisnigri Romesser et al. 1981 type strain JR1.</title>
        <authorList>
            <person name="Anderson I.J."/>
            <person name="Sieprawska-Lupa M."/>
            <person name="Lapidus A."/>
            <person name="Nolan M."/>
            <person name="Copeland A."/>
            <person name="Glavina Del Rio T."/>
            <person name="Tice H."/>
            <person name="Dalin E."/>
            <person name="Barry K."/>
            <person name="Saunders E."/>
            <person name="Han C."/>
            <person name="Brettin T."/>
            <person name="Detter J.C."/>
            <person name="Bruce D."/>
            <person name="Mikhailova N."/>
            <person name="Pitluck S."/>
            <person name="Hauser L."/>
            <person name="Land M."/>
            <person name="Lucas S."/>
            <person name="Richardson P."/>
            <person name="Whitman W.B."/>
            <person name="Kyrpides N.C."/>
        </authorList>
    </citation>
    <scope>NUCLEOTIDE SEQUENCE [LARGE SCALE GENOMIC DNA]</scope>
    <source>
        <strain>ATCC 35101 / DSM 1498 / JR1</strain>
    </source>
</reference>
<dbReference type="EMBL" id="CP000562">
    <property type="protein sequence ID" value="ABN57925.1"/>
    <property type="molecule type" value="Genomic_DNA"/>
</dbReference>
<dbReference type="RefSeq" id="WP_011844834.1">
    <property type="nucleotide sequence ID" value="NC_009051.1"/>
</dbReference>
<dbReference type="SMR" id="A3CX25"/>
<dbReference type="STRING" id="368407.Memar_1999"/>
<dbReference type="GeneID" id="4847714"/>
<dbReference type="KEGG" id="mem:Memar_1999"/>
<dbReference type="eggNOG" id="arCOG00105">
    <property type="taxonomic scope" value="Archaea"/>
</dbReference>
<dbReference type="HOGENOM" id="CLU_019250_2_2_2"/>
<dbReference type="OrthoDB" id="53136at2157"/>
<dbReference type="UniPathway" id="UPA00148"/>
<dbReference type="Proteomes" id="UP000002146">
    <property type="component" value="Chromosome"/>
</dbReference>
<dbReference type="GO" id="GO:0015420">
    <property type="term" value="F:ABC-type vitamin B12 transporter activity"/>
    <property type="evidence" value="ECO:0007669"/>
    <property type="project" value="UniProtKB-UniRule"/>
</dbReference>
<dbReference type="GO" id="GO:0003824">
    <property type="term" value="F:catalytic activity"/>
    <property type="evidence" value="ECO:0007669"/>
    <property type="project" value="InterPro"/>
</dbReference>
<dbReference type="GO" id="GO:0009236">
    <property type="term" value="P:cobalamin biosynthetic process"/>
    <property type="evidence" value="ECO:0007669"/>
    <property type="project" value="UniProtKB-UniRule"/>
</dbReference>
<dbReference type="CDD" id="cd05389">
    <property type="entry name" value="CobQ_N"/>
    <property type="match status" value="1"/>
</dbReference>
<dbReference type="CDD" id="cd01750">
    <property type="entry name" value="GATase1_CobQ"/>
    <property type="match status" value="1"/>
</dbReference>
<dbReference type="Gene3D" id="3.40.50.880">
    <property type="match status" value="1"/>
</dbReference>
<dbReference type="Gene3D" id="3.40.50.300">
    <property type="entry name" value="P-loop containing nucleotide triphosphate hydrolases"/>
    <property type="match status" value="1"/>
</dbReference>
<dbReference type="HAMAP" id="MF_00028">
    <property type="entry name" value="CobQ"/>
    <property type="match status" value="1"/>
</dbReference>
<dbReference type="InterPro" id="IPR029062">
    <property type="entry name" value="Class_I_gatase-like"/>
</dbReference>
<dbReference type="InterPro" id="IPR002586">
    <property type="entry name" value="CobQ/CobB/MinD/ParA_Nub-bd_dom"/>
</dbReference>
<dbReference type="InterPro" id="IPR033949">
    <property type="entry name" value="CobQ_GATase1"/>
</dbReference>
<dbReference type="InterPro" id="IPR047045">
    <property type="entry name" value="CobQ_N"/>
</dbReference>
<dbReference type="InterPro" id="IPR004459">
    <property type="entry name" value="CobQ_synth"/>
</dbReference>
<dbReference type="InterPro" id="IPR011698">
    <property type="entry name" value="GATase_3"/>
</dbReference>
<dbReference type="InterPro" id="IPR027417">
    <property type="entry name" value="P-loop_NTPase"/>
</dbReference>
<dbReference type="NCBIfam" id="TIGR00313">
    <property type="entry name" value="cobQ"/>
    <property type="match status" value="1"/>
</dbReference>
<dbReference type="NCBIfam" id="NF001989">
    <property type="entry name" value="PRK00784.1"/>
    <property type="match status" value="1"/>
</dbReference>
<dbReference type="PANTHER" id="PTHR21343:SF1">
    <property type="entry name" value="COBYRIC ACID SYNTHASE"/>
    <property type="match status" value="1"/>
</dbReference>
<dbReference type="PANTHER" id="PTHR21343">
    <property type="entry name" value="DETHIOBIOTIN SYNTHETASE"/>
    <property type="match status" value="1"/>
</dbReference>
<dbReference type="Pfam" id="PF01656">
    <property type="entry name" value="CbiA"/>
    <property type="match status" value="1"/>
</dbReference>
<dbReference type="Pfam" id="PF07685">
    <property type="entry name" value="GATase_3"/>
    <property type="match status" value="1"/>
</dbReference>
<dbReference type="SUPFAM" id="SSF52317">
    <property type="entry name" value="Class I glutamine amidotransferase-like"/>
    <property type="match status" value="1"/>
</dbReference>
<dbReference type="SUPFAM" id="SSF52540">
    <property type="entry name" value="P-loop containing nucleoside triphosphate hydrolases"/>
    <property type="match status" value="1"/>
</dbReference>
<dbReference type="PROSITE" id="PS51274">
    <property type="entry name" value="GATASE_COBBQ"/>
    <property type="match status" value="1"/>
</dbReference>
<feature type="chain" id="PRO_0000332403" description="Probable cobyric acid synthase">
    <location>
        <begin position="1"/>
        <end position="492"/>
    </location>
</feature>
<feature type="domain" description="GATase cobBQ-type" evidence="1">
    <location>
        <begin position="248"/>
        <end position="434"/>
    </location>
</feature>
<feature type="active site" description="Nucleophile" evidence="1">
    <location>
        <position position="327"/>
    </location>
</feature>
<feature type="active site" evidence="1">
    <location>
        <position position="426"/>
    </location>
</feature>
<gene>
    <name evidence="1" type="primary">cobQ</name>
    <name type="ordered locus">Memar_1999</name>
</gene>
<organism>
    <name type="scientific">Methanoculleus marisnigri (strain ATCC 35101 / DSM 1498 / JR1)</name>
    <dbReference type="NCBI Taxonomy" id="368407"/>
    <lineage>
        <taxon>Archaea</taxon>
        <taxon>Methanobacteriati</taxon>
        <taxon>Methanobacteriota</taxon>
        <taxon>Stenosarchaea group</taxon>
        <taxon>Methanomicrobia</taxon>
        <taxon>Methanomicrobiales</taxon>
        <taxon>Methanomicrobiaceae</taxon>
        <taxon>Methanoculleus</taxon>
    </lineage>
</organism>